<keyword id="KW-1003">Cell membrane</keyword>
<keyword id="KW-0249">Electron transport</keyword>
<keyword id="KW-0349">Heme</keyword>
<keyword id="KW-0408">Iron</keyword>
<keyword id="KW-0472">Membrane</keyword>
<keyword id="KW-0479">Metal-binding</keyword>
<keyword id="KW-1185">Reference proteome</keyword>
<keyword id="KW-0812">Transmembrane</keyword>
<keyword id="KW-1133">Transmembrane helix</keyword>
<keyword id="KW-0813">Transport</keyword>
<proteinExistence type="evidence at protein level"/>
<protein>
    <recommendedName>
        <fullName evidence="4">Cytochrome c-type protein Cgr1</fullName>
    </recommendedName>
    <alternativeName>
        <fullName evidence="3">Cardiac glycoside reductase operon protein 1</fullName>
    </alternativeName>
</protein>
<dbReference type="EMBL" id="CP001726">
    <property type="protein sequence ID" value="ACV56483.1"/>
    <property type="molecule type" value="Genomic_DNA"/>
</dbReference>
<dbReference type="RefSeq" id="WP_015761236.1">
    <property type="nucleotide sequence ID" value="NC_013204.1"/>
</dbReference>
<dbReference type="STRING" id="479437.Elen_2528"/>
<dbReference type="PaxDb" id="479437-Elen_2528"/>
<dbReference type="KEGG" id="ele:Elen_2528"/>
<dbReference type="eggNOG" id="COG3303">
    <property type="taxonomic scope" value="Bacteria"/>
</dbReference>
<dbReference type="HOGENOM" id="CLU_107073_0_0_11"/>
<dbReference type="OrthoDB" id="5397337at2"/>
<dbReference type="BioCyc" id="ELEN479437:G1GFY-2551-MONOMER"/>
<dbReference type="Proteomes" id="UP000001377">
    <property type="component" value="Chromosome"/>
</dbReference>
<dbReference type="GO" id="GO:0005886">
    <property type="term" value="C:plasma membrane"/>
    <property type="evidence" value="ECO:0007669"/>
    <property type="project" value="UniProtKB-SubCell"/>
</dbReference>
<dbReference type="GO" id="GO:0046872">
    <property type="term" value="F:metal ion binding"/>
    <property type="evidence" value="ECO:0007669"/>
    <property type="project" value="UniProtKB-KW"/>
</dbReference>
<dbReference type="Gene3D" id="1.10.1130.10">
    <property type="entry name" value="Flavocytochrome C3, Chain A"/>
    <property type="match status" value="1"/>
</dbReference>
<dbReference type="InterPro" id="IPR036280">
    <property type="entry name" value="Multihaem_cyt_sf"/>
</dbReference>
<dbReference type="InterPro" id="IPR012286">
    <property type="entry name" value="Tetrahaem_cytochrome"/>
</dbReference>
<dbReference type="Pfam" id="PF14537">
    <property type="entry name" value="Cytochrom_c3_2"/>
    <property type="match status" value="1"/>
</dbReference>
<dbReference type="SUPFAM" id="SSF48695">
    <property type="entry name" value="Multiheme cytochromes"/>
    <property type="match status" value="1"/>
</dbReference>
<dbReference type="PROSITE" id="PS51008">
    <property type="entry name" value="MULTIHEME_CYTC"/>
    <property type="match status" value="1"/>
</dbReference>
<comment type="function">
    <text evidence="5">Probably transfers electrons from a membrane-associated electron donor (e.g. the membrane quinone pool) to the [4Fe-4S] cluster of the Cgr2 reductase via its covalently bound heme groups.</text>
</comment>
<comment type="subunit">
    <text evidence="5">May form a membrane-associated complex with Cgr2.</text>
</comment>
<comment type="subcellular location">
    <subcellularLocation>
        <location evidence="1">Cell membrane</location>
        <topology evidence="1">Single-pass membrane protein</topology>
    </subcellularLocation>
</comment>
<comment type="induction">
    <text evidence="2">Is highly up-regulated by digoxin and other cardiac glycosides containing unsaturated butyrolactone rings, such as digitoxin, digoxigenin, and, to a lesser extent, ouabain. Is repressed by arginine but not by ornithine. Part of an operon that consists of cgr1 and cgr2.</text>
</comment>
<comment type="PTM">
    <text evidence="4">Binds 5 heme groups per subunit.</text>
</comment>
<comment type="similarity">
    <text evidence="4">Belongs to the multiheme cytochrome c family.</text>
</comment>
<name>CGR1_EGGLE</name>
<evidence type="ECO:0000255" key="1"/>
<evidence type="ECO:0000269" key="2">
    <source>
    </source>
</evidence>
<evidence type="ECO:0000303" key="3">
    <source>
    </source>
</evidence>
<evidence type="ECO:0000305" key="4"/>
<evidence type="ECO:0000305" key="5">
    <source>
    </source>
</evidence>
<evidence type="ECO:0000312" key="6">
    <source>
        <dbReference type="EMBL" id="ACV56483.1"/>
    </source>
</evidence>
<sequence>MAEEPVVIGDPAPRTRKWPIVVGVVVVVLIAAGAGFWVWHEQPSFCAAICHTPMDEYLETYEQEAGTAGVDKWGNEVANTNAMLAVSHKAQGKDCMACHVPTLSEQMSEGMNWVTGNYVYPLEERDTEMLTEARGVDADEFCLNESCHNLTRDDLIKATSDMEFNPHQPQHGEIECSECHKAHRASVMYCTQCHSEAEVPEGWLTVAEANKLSTAA</sequence>
<reference key="1">
    <citation type="journal article" date="2009" name="Stand. Genomic Sci.">
        <title>Complete genome sequence of Eggerthella lenta type strain (IPP VPI 0255).</title>
        <authorList>
            <person name="Saunders E."/>
            <person name="Pukall R."/>
            <person name="Abt B."/>
            <person name="Lapidus A."/>
            <person name="Glavina Del Rio T."/>
            <person name="Copeland A."/>
            <person name="Tice H."/>
            <person name="Cheng J.F."/>
            <person name="Lucas S."/>
            <person name="Chen F."/>
            <person name="Nolan M."/>
            <person name="Bruce D."/>
            <person name="Goodwin L."/>
            <person name="Pitluck S."/>
            <person name="Ivanova N."/>
            <person name="Mavromatis K."/>
            <person name="Ovchinnikova G."/>
            <person name="Pati A."/>
            <person name="Chen A."/>
            <person name="Palaniappan K."/>
            <person name="Land M."/>
            <person name="Hauser L."/>
            <person name="Chang Y.J."/>
            <person name="Jeffries C.D."/>
            <person name="Chain P."/>
            <person name="Meincke L."/>
            <person name="Sims D."/>
            <person name="Brettin T."/>
            <person name="Detter J.C."/>
            <person name="Goker M."/>
            <person name="Bristow J."/>
            <person name="Eisen J.A."/>
            <person name="Markowitz V."/>
            <person name="Hugenholtz P."/>
            <person name="Kyrpides N.C."/>
            <person name="Klenk H.P."/>
            <person name="Han C."/>
        </authorList>
    </citation>
    <scope>NUCLEOTIDE SEQUENCE [LARGE SCALE GENOMIC DNA]</scope>
    <source>
        <strain>ATCC 25559 / DSM 2243 / CCUG 17323 / JCM 9979 / KCTC 3265 / NCTC 11813 / VPI 0255 / 1899 B</strain>
    </source>
</reference>
<reference key="2">
    <citation type="journal article" date="2013" name="Science">
        <title>Predicting and manipulating cardiac drug inactivation by the human gut bacterium Eggerthella lenta.</title>
        <authorList>
            <person name="Haiser H.J."/>
            <person name="Gootenberg D.B."/>
            <person name="Chatman K."/>
            <person name="Sirasani G."/>
            <person name="Balskus E.P."/>
            <person name="Turnbaugh P.J."/>
        </authorList>
    </citation>
    <scope>INDUCTION</scope>
    <source>
        <strain>ATCC 25559 / DSM 2243 / CCUG 17323 / JCM 9979 / KCTC 3265 / NCTC 11813 / VPI 0255 / 1899 B</strain>
    </source>
</reference>
<reference key="3">
    <citation type="journal article" date="2018" name="Elife">
        <title>Discovery and characterization of a prevalent human gut bacterial enzyme sufficient for the inactivation of a family of plant toxins.</title>
        <authorList>
            <person name="Koppel N."/>
            <person name="Bisanz J.E."/>
            <person name="Pandelia M.E."/>
            <person name="Turnbaugh P.J."/>
            <person name="Balskus E.P."/>
        </authorList>
    </citation>
    <scope>FUNCTION</scope>
    <scope>SUBUNIT</scope>
    <source>
        <strain>ATCC 25559 / DSM 2243 / CCUG 17323 / JCM 9979 / KCTC 3265 / NCTC 11813 / VPI 0255 / 1899 B</strain>
    </source>
</reference>
<gene>
    <name evidence="3" type="primary">cgr1</name>
    <name evidence="6" type="ordered locus">Elen_2528</name>
</gene>
<accession>C8WLM0</accession>
<feature type="chain" id="PRO_0000449513" description="Cytochrome c-type protein Cgr1">
    <location>
        <begin position="1"/>
        <end position="216"/>
    </location>
</feature>
<feature type="transmembrane region" description="Helical" evidence="1">
    <location>
        <begin position="18"/>
        <end position="38"/>
    </location>
</feature>
<feature type="binding site" description="covalent" evidence="4">
    <location>
        <position position="46"/>
    </location>
    <ligand>
        <name>heme</name>
        <dbReference type="ChEBI" id="CHEBI:30413"/>
        <label>1</label>
    </ligand>
</feature>
<feature type="binding site" description="covalent" evidence="4">
    <location>
        <position position="50"/>
    </location>
    <ligand>
        <name>heme</name>
        <dbReference type="ChEBI" id="CHEBI:30413"/>
        <label>1</label>
    </ligand>
</feature>
<feature type="binding site" description="axial binding residue" evidence="4">
    <location>
        <position position="51"/>
    </location>
    <ligand>
        <name>heme</name>
        <dbReference type="ChEBI" id="CHEBI:30413"/>
        <label>1</label>
    </ligand>
    <ligandPart>
        <name>Fe</name>
        <dbReference type="ChEBI" id="CHEBI:18248"/>
    </ligandPart>
</feature>
<feature type="binding site" description="covalent" evidence="4">
    <location>
        <position position="95"/>
    </location>
    <ligand>
        <name>heme</name>
        <dbReference type="ChEBI" id="CHEBI:30413"/>
        <label>2</label>
    </ligand>
</feature>
<feature type="binding site" description="covalent" evidence="4">
    <location>
        <position position="98"/>
    </location>
    <ligand>
        <name>heme</name>
        <dbReference type="ChEBI" id="CHEBI:30413"/>
        <label>2</label>
    </ligand>
</feature>
<feature type="binding site" description="axial binding residue" evidence="4">
    <location>
        <position position="99"/>
    </location>
    <ligand>
        <name>heme</name>
        <dbReference type="ChEBI" id="CHEBI:30413"/>
        <label>2</label>
    </ligand>
    <ligandPart>
        <name>Fe</name>
        <dbReference type="ChEBI" id="CHEBI:18248"/>
    </ligandPart>
</feature>
<feature type="binding site" description="covalent" evidence="4">
    <location>
        <position position="142"/>
    </location>
    <ligand>
        <name>heme</name>
        <dbReference type="ChEBI" id="CHEBI:30413"/>
        <label>3</label>
    </ligand>
</feature>
<feature type="binding site" description="covalent" evidence="4">
    <location>
        <position position="147"/>
    </location>
    <ligand>
        <name>heme</name>
        <dbReference type="ChEBI" id="CHEBI:30413"/>
        <label>3</label>
    </ligand>
</feature>
<feature type="binding site" description="axial binding residue" evidence="4">
    <location>
        <position position="148"/>
    </location>
    <ligand>
        <name>heme</name>
        <dbReference type="ChEBI" id="CHEBI:30413"/>
        <label>3</label>
    </ligand>
    <ligandPart>
        <name>Fe</name>
        <dbReference type="ChEBI" id="CHEBI:18248"/>
    </ligandPart>
</feature>
<feature type="binding site" description="covalent" evidence="4">
    <location>
        <position position="176"/>
    </location>
    <ligand>
        <name>heme</name>
        <dbReference type="ChEBI" id="CHEBI:30413"/>
        <label>4</label>
    </ligand>
</feature>
<feature type="binding site" description="covalent" evidence="4">
    <location>
        <position position="179"/>
    </location>
    <ligand>
        <name>heme</name>
        <dbReference type="ChEBI" id="CHEBI:30413"/>
        <label>4</label>
    </ligand>
</feature>
<feature type="binding site" description="axial binding residue" evidence="4">
    <location>
        <position position="180"/>
    </location>
    <ligand>
        <name>heme</name>
        <dbReference type="ChEBI" id="CHEBI:30413"/>
        <label>4</label>
    </ligand>
    <ligandPart>
        <name>Fe</name>
        <dbReference type="ChEBI" id="CHEBI:18248"/>
    </ligandPart>
</feature>
<feature type="binding site" description="covalent" evidence="4">
    <location>
        <position position="190"/>
    </location>
    <ligand>
        <name>heme</name>
        <dbReference type="ChEBI" id="CHEBI:30413"/>
        <label>5</label>
    </ligand>
</feature>
<feature type="binding site" description="covalent" evidence="4">
    <location>
        <position position="193"/>
    </location>
    <ligand>
        <name>heme</name>
        <dbReference type="ChEBI" id="CHEBI:30413"/>
        <label>5</label>
    </ligand>
</feature>
<feature type="binding site" description="axial binding residue" evidence="4">
    <location>
        <position position="194"/>
    </location>
    <ligand>
        <name>heme</name>
        <dbReference type="ChEBI" id="CHEBI:30413"/>
        <label>5</label>
    </ligand>
    <ligandPart>
        <name>Fe</name>
        <dbReference type="ChEBI" id="CHEBI:18248"/>
    </ligandPart>
</feature>
<organism>
    <name type="scientific">Eggerthella lenta (strain ATCC 25559 / DSM 2243 / CCUG 17323 / JCM 9979 / KCTC 3265 / NCTC 11813 / VPI 0255 / 1899 B)</name>
    <name type="common">Eubacterium lentum</name>
    <dbReference type="NCBI Taxonomy" id="479437"/>
    <lineage>
        <taxon>Bacteria</taxon>
        <taxon>Bacillati</taxon>
        <taxon>Actinomycetota</taxon>
        <taxon>Coriobacteriia</taxon>
        <taxon>Eggerthellales</taxon>
        <taxon>Eggerthellaceae</taxon>
        <taxon>Eggerthella</taxon>
    </lineage>
</organism>